<feature type="signal peptide" evidence="1">
    <location>
        <begin position="1"/>
        <end position="24"/>
    </location>
</feature>
<feature type="chain" id="PRO_0000034048" description="Thaumatin-like protein 1a">
    <location>
        <begin position="25"/>
        <end position="246"/>
    </location>
</feature>
<feature type="disulfide bond" evidence="2">
    <location>
        <begin position="33"/>
        <end position="245"/>
    </location>
</feature>
<feature type="disulfide bond" evidence="2">
    <location>
        <begin position="81"/>
        <end position="91"/>
    </location>
</feature>
<feature type="disulfide bond" evidence="2">
    <location>
        <begin position="96"/>
        <end position="103"/>
    </location>
</feature>
<feature type="disulfide bond" evidence="2">
    <location>
        <begin position="151"/>
        <end position="234"/>
    </location>
</feature>
<feature type="disulfide bond" evidence="2">
    <location>
        <begin position="156"/>
        <end position="217"/>
    </location>
</feature>
<feature type="disulfide bond" evidence="2">
    <location>
        <begin position="164"/>
        <end position="180"/>
    </location>
</feature>
<feature type="disulfide bond" evidence="2">
    <location>
        <begin position="184"/>
        <end position="193"/>
    </location>
</feature>
<feature type="disulfide bond" evidence="2">
    <location>
        <begin position="194"/>
        <end position="204"/>
    </location>
</feature>
<feature type="sequence conflict" description="In Ref. 1; AAC36740." evidence="3" ref="1">
    <original>SLLGLTLAIL</original>
    <variation>PRPTLAILF</variation>
    <location>
        <begin position="8"/>
        <end position="17"/>
    </location>
</feature>
<feature type="sequence conflict" description="In Ref. 3; AAM12886." evidence="3" ref="3">
    <original>Y</original>
    <variation>F</variation>
    <location>
        <position position="127"/>
    </location>
</feature>
<feature type="sequence conflict" description="In Ref. 3; AAM12886." evidence="3" ref="3">
    <original>V</original>
    <variation>A</variation>
    <location>
        <position position="163"/>
    </location>
</feature>
<feature type="sequence conflict" description="In Ref. 3; AAM12886." evidence="3" ref="3">
    <original>P</original>
    <variation>Q</variation>
    <location>
        <position position="167"/>
    </location>
</feature>
<feature type="strand" evidence="5">
    <location>
        <begin position="26"/>
        <end position="31"/>
    </location>
</feature>
<feature type="strand" evidence="5">
    <location>
        <begin position="33"/>
        <end position="35"/>
    </location>
</feature>
<feature type="strand" evidence="5">
    <location>
        <begin position="37"/>
        <end position="43"/>
    </location>
</feature>
<feature type="strand" evidence="5">
    <location>
        <begin position="62"/>
        <end position="66"/>
    </location>
</feature>
<feature type="strand" evidence="5">
    <location>
        <begin position="69"/>
        <end position="83"/>
    </location>
</feature>
<feature type="strand" evidence="5">
    <location>
        <begin position="89"/>
        <end position="94"/>
    </location>
</feature>
<feature type="strand" evidence="5">
    <location>
        <begin position="97"/>
        <end position="102"/>
    </location>
</feature>
<feature type="strand" evidence="5">
    <location>
        <begin position="114"/>
        <end position="119"/>
    </location>
</feature>
<feature type="helix" evidence="5">
    <location>
        <begin position="121"/>
        <end position="123"/>
    </location>
</feature>
<feature type="strand" evidence="5">
    <location>
        <begin position="126"/>
        <end position="131"/>
    </location>
</feature>
<feature type="strand" evidence="5">
    <location>
        <begin position="136"/>
        <end position="138"/>
    </location>
</feature>
<feature type="strand" evidence="5">
    <location>
        <begin position="140"/>
        <end position="146"/>
    </location>
</feature>
<feature type="strand" evidence="5">
    <location>
        <begin position="154"/>
        <end position="156"/>
    </location>
</feature>
<feature type="helix" evidence="5">
    <location>
        <begin position="160"/>
        <end position="163"/>
    </location>
</feature>
<feature type="helix" evidence="5">
    <location>
        <begin position="166"/>
        <end position="168"/>
    </location>
</feature>
<feature type="strand" evidence="5">
    <location>
        <begin position="169"/>
        <end position="171"/>
    </location>
</feature>
<feature type="strand" evidence="5">
    <location>
        <begin position="177"/>
        <end position="180"/>
    </location>
</feature>
<feature type="helix" evidence="5">
    <location>
        <begin position="183"/>
        <end position="187"/>
    </location>
</feature>
<feature type="helix" evidence="5">
    <location>
        <begin position="190"/>
        <end position="193"/>
    </location>
</feature>
<feature type="helix" evidence="5">
    <location>
        <begin position="201"/>
        <end position="203"/>
    </location>
</feature>
<feature type="helix" evidence="5">
    <location>
        <begin position="208"/>
        <end position="216"/>
    </location>
</feature>
<feature type="strand" evidence="5">
    <location>
        <begin position="232"/>
        <end position="236"/>
    </location>
</feature>
<feature type="strand" evidence="5">
    <location>
        <begin position="239"/>
        <end position="244"/>
    </location>
</feature>
<evidence type="ECO:0000255" key="1"/>
<evidence type="ECO:0000255" key="2">
    <source>
        <dbReference type="PROSITE-ProRule" id="PRU00699"/>
    </source>
</evidence>
<evidence type="ECO:0000305" key="3"/>
<evidence type="ECO:0000312" key="4">
    <source>
        <dbReference type="EMBL" id="CAC10270.1"/>
    </source>
</evidence>
<evidence type="ECO:0007829" key="5">
    <source>
        <dbReference type="PDB" id="3ZS3"/>
    </source>
</evidence>
<proteinExistence type="evidence at protein level"/>
<accession>Q9FSG7</accession>
<accession>O82546</accession>
<organism evidence="4">
    <name type="scientific">Malus domestica</name>
    <name type="common">Apple</name>
    <name type="synonym">Pyrus malus</name>
    <dbReference type="NCBI Taxonomy" id="3750"/>
    <lineage>
        <taxon>Eukaryota</taxon>
        <taxon>Viridiplantae</taxon>
        <taxon>Streptophyta</taxon>
        <taxon>Embryophyta</taxon>
        <taxon>Tracheophyta</taxon>
        <taxon>Spermatophyta</taxon>
        <taxon>Magnoliopsida</taxon>
        <taxon>eudicotyledons</taxon>
        <taxon>Gunneridae</taxon>
        <taxon>Pentapetalae</taxon>
        <taxon>rosids</taxon>
        <taxon>fabids</taxon>
        <taxon>Rosales</taxon>
        <taxon>Rosaceae</taxon>
        <taxon>Amygdaloideae</taxon>
        <taxon>Maleae</taxon>
        <taxon>Malus</taxon>
    </lineage>
</organism>
<keyword id="KW-0002">3D-structure</keyword>
<keyword id="KW-0020">Allergen</keyword>
<keyword id="KW-1015">Disulfide bond</keyword>
<keyword id="KW-0964">Secreted</keyword>
<keyword id="KW-0732">Signal</keyword>
<reference key="1">
    <citation type="journal article" date="2000" name="Biosci. Biotechnol. Biochem.">
        <title>Isolation of a cDNA encoding a 31-kDa, pathogenesis-related 5/thaumatin-like (PR5/TL) protein abundantly expressed in apple fruit (Nalus domestica cv. Fuji).</title>
        <authorList>
            <person name="Oh D.H."/>
            <person name="Song K.J."/>
            <person name="Shin Y.U."/>
            <person name="Chung W.I."/>
        </authorList>
    </citation>
    <scope>NUCLEOTIDE SEQUENCE [MRNA]</scope>
    <source>
        <strain>cv. Fuji</strain>
    </source>
</reference>
<reference key="2">
    <citation type="journal article" date="2003" name="J. Mol. Biol.">
        <title>Plant-based heterologous expression of Mal d 2, a thaumatin-like protein and allergen of apple (Malus domestica), and its characterization as an antifungal protein.</title>
        <authorList>
            <person name="Krebitz M."/>
            <person name="Wagner B."/>
            <person name="Ferreira F."/>
            <person name="Peterbauer C."/>
            <person name="Campillo N."/>
            <person name="Witty M."/>
            <person name="Kolarich D."/>
            <person name="Steinkellner H."/>
            <person name="Scheiner O."/>
            <person name="Breiteneder H."/>
        </authorList>
    </citation>
    <scope>NUCLEOTIDE SEQUENCE [MRNA]</scope>
    <source>
        <strain>cv. Golden Delicious</strain>
        <tissue>Pericarp</tissue>
    </source>
</reference>
<reference key="3">
    <citation type="journal article" date="2002" name="Mol. Plant Microbe Interact.">
        <title>Modulation of defense responses of Malus spp. during compatible and incompatible interactions with Erwinia amylovora.</title>
        <authorList>
            <person name="Venisse J.-S."/>
            <person name="Malnoy M."/>
            <person name="Faize M."/>
            <person name="Paulin J.-P."/>
            <person name="Brisset M.-N."/>
        </authorList>
    </citation>
    <scope>NUCLEOTIDE SEQUENCE [MRNA] OF 35-246</scope>
    <source>
        <strain>cv. Evereste X MM106</strain>
        <tissue>Leaf</tissue>
    </source>
</reference>
<protein>
    <recommendedName>
        <fullName>Thaumatin-like protein 1a</fullName>
    </recommendedName>
    <alternativeName>
        <fullName>Mdtl1</fullName>
    </alternativeName>
    <alternativeName>
        <fullName>Pathogenesis-related protein 5a</fullName>
        <shortName>PR-5a</shortName>
    </alternativeName>
    <allergenName>Mal d 2</allergenName>
</protein>
<sequence length="246" mass="25700">MMKSQVASLLGLTLAILFFSGAHAAKITFTNNCPNTVWPGTLTGDQKPQLSLTGFELASKASRSVDAPSPWSGRFWGRTRCSTDAAGKFTCETADCGSGQVACNGAGAVPPATLVEITIAANGGQDYYDVSLVDGFNLPMSVAPQGGTGECKPSSCPANVNKVCPAPLQVKAADGSVISCKSACLAFGDSKYCCTPPNNTPETCPPTEYSEIFEKQCPQAYSYAYDDKNSTFTCSGGPDYVITFCP</sequence>
<gene>
    <name type="primary">TL1</name>
    <name type="synonym">TL</name>
</gene>
<comment type="subcellular location">
    <subcellularLocation>
        <location evidence="3">Secreted</location>
    </subcellularLocation>
</comment>
<comment type="allergen">
    <text>Causes an allergic reaction in human. Important allergen of apple fruits that is associated with IgE-mediated symptoms in apple allergic individuals.</text>
</comment>
<comment type="similarity">
    <text evidence="2">Belongs to the thaumatin family.</text>
</comment>
<name>TP1A_MALDO</name>
<dbReference type="EMBL" id="AF090143">
    <property type="protein sequence ID" value="AAC36740.1"/>
    <property type="molecule type" value="mRNA"/>
</dbReference>
<dbReference type="EMBL" id="AJ243427">
    <property type="protein sequence ID" value="CAC10270.1"/>
    <property type="molecule type" value="mRNA"/>
</dbReference>
<dbReference type="EMBL" id="AF494393">
    <property type="protein sequence ID" value="AAM12886.1"/>
    <property type="molecule type" value="mRNA"/>
</dbReference>
<dbReference type="RefSeq" id="NP_001315714.1">
    <property type="nucleotide sequence ID" value="NM_001328785.1"/>
</dbReference>
<dbReference type="PDB" id="3ZS3">
    <property type="method" value="X-ray"/>
    <property type="resolution" value="1.80 A"/>
    <property type="chains" value="A=25-246"/>
</dbReference>
<dbReference type="PDBsum" id="3ZS3"/>
<dbReference type="SMR" id="Q9FSG7"/>
<dbReference type="Allergome" id="3360">
    <property type="allergen name" value="Mal d 2.0101"/>
</dbReference>
<dbReference type="Allergome" id="465">
    <property type="allergen name" value="Mal d 2"/>
</dbReference>
<dbReference type="GeneID" id="103411735"/>
<dbReference type="KEGG" id="mdm:103411735"/>
<dbReference type="OrthoDB" id="430315at2759"/>
<dbReference type="EvolutionaryTrace" id="Q9FSG7"/>
<dbReference type="GO" id="GO:0005576">
    <property type="term" value="C:extracellular region"/>
    <property type="evidence" value="ECO:0007669"/>
    <property type="project" value="UniProtKB-SubCell"/>
</dbReference>
<dbReference type="CDD" id="cd09218">
    <property type="entry name" value="TLP-PA"/>
    <property type="match status" value="1"/>
</dbReference>
<dbReference type="FunFam" id="2.60.110.10:FF:000002">
    <property type="entry name" value="Thaumatin-like protein 1a"/>
    <property type="match status" value="1"/>
</dbReference>
<dbReference type="Gene3D" id="2.60.110.10">
    <property type="entry name" value="Thaumatin"/>
    <property type="match status" value="1"/>
</dbReference>
<dbReference type="InterPro" id="IPR037176">
    <property type="entry name" value="Osmotin/thaumatin-like_sf"/>
</dbReference>
<dbReference type="InterPro" id="IPR001938">
    <property type="entry name" value="Thaumatin"/>
</dbReference>
<dbReference type="InterPro" id="IPR017949">
    <property type="entry name" value="Thaumatin_CS"/>
</dbReference>
<dbReference type="PANTHER" id="PTHR31048">
    <property type="entry name" value="OS03G0233200 PROTEIN"/>
    <property type="match status" value="1"/>
</dbReference>
<dbReference type="Pfam" id="PF00314">
    <property type="entry name" value="Thaumatin"/>
    <property type="match status" value="1"/>
</dbReference>
<dbReference type="PIRSF" id="PIRSF002703">
    <property type="entry name" value="Thaumatin"/>
    <property type="match status" value="1"/>
</dbReference>
<dbReference type="PRINTS" id="PR00347">
    <property type="entry name" value="THAUMATIN"/>
</dbReference>
<dbReference type="SMART" id="SM00205">
    <property type="entry name" value="THN"/>
    <property type="match status" value="1"/>
</dbReference>
<dbReference type="SUPFAM" id="SSF49870">
    <property type="entry name" value="Osmotin, thaumatin-like protein"/>
    <property type="match status" value="1"/>
</dbReference>
<dbReference type="PROSITE" id="PS00316">
    <property type="entry name" value="THAUMATIN_1"/>
    <property type="match status" value="1"/>
</dbReference>
<dbReference type="PROSITE" id="PS51367">
    <property type="entry name" value="THAUMATIN_2"/>
    <property type="match status" value="1"/>
</dbReference>